<proteinExistence type="inferred from homology"/>
<keyword id="KW-0066">ATP synthesis</keyword>
<keyword id="KW-0997">Cell inner membrane</keyword>
<keyword id="KW-1003">Cell membrane</keyword>
<keyword id="KW-0139">CF(1)</keyword>
<keyword id="KW-0375">Hydrogen ion transport</keyword>
<keyword id="KW-0406">Ion transport</keyword>
<keyword id="KW-0472">Membrane</keyword>
<keyword id="KW-0813">Transport</keyword>
<accession>B0UE42</accession>
<name>ATPD_METS4</name>
<organism>
    <name type="scientific">Methylobacterium sp. (strain 4-46)</name>
    <dbReference type="NCBI Taxonomy" id="426117"/>
    <lineage>
        <taxon>Bacteria</taxon>
        <taxon>Pseudomonadati</taxon>
        <taxon>Pseudomonadota</taxon>
        <taxon>Alphaproteobacteria</taxon>
        <taxon>Hyphomicrobiales</taxon>
        <taxon>Methylobacteriaceae</taxon>
        <taxon>Methylobacterium</taxon>
    </lineage>
</organism>
<gene>
    <name evidence="1" type="primary">atpH</name>
    <name type="ordered locus">M446_6638</name>
</gene>
<comment type="function">
    <text evidence="1">F(1)F(0) ATP synthase produces ATP from ADP in the presence of a proton or sodium gradient. F-type ATPases consist of two structural domains, F(1) containing the extramembraneous catalytic core and F(0) containing the membrane proton channel, linked together by a central stalk and a peripheral stalk. During catalysis, ATP synthesis in the catalytic domain of F(1) is coupled via a rotary mechanism of the central stalk subunits to proton translocation.</text>
</comment>
<comment type="function">
    <text evidence="1">This protein is part of the stalk that links CF(0) to CF(1). It either transmits conformational changes from CF(0) to CF(1) or is implicated in proton conduction.</text>
</comment>
<comment type="subunit">
    <text evidence="1">F-type ATPases have 2 components, F(1) - the catalytic core - and F(0) - the membrane proton channel. F(1) has five subunits: alpha(3), beta(3), gamma(1), delta(1), epsilon(1). F(0) has three main subunits: a(1), b(2) and c(10-14). The alpha and beta chains form an alternating ring which encloses part of the gamma chain. F(1) is attached to F(0) by a central stalk formed by the gamma and epsilon chains, while a peripheral stalk is formed by the delta and b chains.</text>
</comment>
<comment type="subcellular location">
    <subcellularLocation>
        <location evidence="1">Cell inner membrane</location>
        <topology evidence="1">Peripheral membrane protein</topology>
    </subcellularLocation>
</comment>
<comment type="similarity">
    <text evidence="1">Belongs to the ATPase delta chain family.</text>
</comment>
<sequence>MAQNGSESGSTLGGVAGRYASALFELARDERAVDAVTEGLDRFDALLRESADLQRLVRSPVFSTEEQVKAVEAVLARAGITGLAANFIRLAAANRRLFVLPDMIRAYRVLVREAKGIVRAEVRLAEPPSDAVLEEIKASLRDVARAEVELDLRVDPSLIGGIVVKLGSRMVDASLRTRLNSIRLAMRDAR</sequence>
<reference key="1">
    <citation type="submission" date="2008-02" db="EMBL/GenBank/DDBJ databases">
        <title>Complete sequence of chromosome of Methylobacterium sp. 4-46.</title>
        <authorList>
            <consortium name="US DOE Joint Genome Institute"/>
            <person name="Copeland A."/>
            <person name="Lucas S."/>
            <person name="Lapidus A."/>
            <person name="Glavina del Rio T."/>
            <person name="Dalin E."/>
            <person name="Tice H."/>
            <person name="Bruce D."/>
            <person name="Goodwin L."/>
            <person name="Pitluck S."/>
            <person name="Chertkov O."/>
            <person name="Brettin T."/>
            <person name="Detter J.C."/>
            <person name="Han C."/>
            <person name="Kuske C.R."/>
            <person name="Schmutz J."/>
            <person name="Larimer F."/>
            <person name="Land M."/>
            <person name="Hauser L."/>
            <person name="Kyrpides N."/>
            <person name="Ivanova N."/>
            <person name="Marx C.J."/>
            <person name="Richardson P."/>
        </authorList>
    </citation>
    <scope>NUCLEOTIDE SEQUENCE [LARGE SCALE GENOMIC DNA]</scope>
    <source>
        <strain>4-46</strain>
    </source>
</reference>
<protein>
    <recommendedName>
        <fullName evidence="1">ATP synthase subunit delta</fullName>
    </recommendedName>
    <alternativeName>
        <fullName evidence="1">ATP synthase F(1) sector subunit delta</fullName>
    </alternativeName>
    <alternativeName>
        <fullName evidence="1">F-type ATPase subunit delta</fullName>
        <shortName evidence="1">F-ATPase subunit delta</shortName>
    </alternativeName>
</protein>
<dbReference type="EMBL" id="CP000943">
    <property type="protein sequence ID" value="ACA20892.1"/>
    <property type="molecule type" value="Genomic_DNA"/>
</dbReference>
<dbReference type="RefSeq" id="WP_012336268.1">
    <property type="nucleotide sequence ID" value="NC_010511.1"/>
</dbReference>
<dbReference type="SMR" id="B0UE42"/>
<dbReference type="STRING" id="426117.M446_6638"/>
<dbReference type="KEGG" id="met:M446_6638"/>
<dbReference type="eggNOG" id="COG0712">
    <property type="taxonomic scope" value="Bacteria"/>
</dbReference>
<dbReference type="HOGENOM" id="CLU_085114_0_1_5"/>
<dbReference type="GO" id="GO:0005886">
    <property type="term" value="C:plasma membrane"/>
    <property type="evidence" value="ECO:0007669"/>
    <property type="project" value="UniProtKB-SubCell"/>
</dbReference>
<dbReference type="GO" id="GO:0045259">
    <property type="term" value="C:proton-transporting ATP synthase complex"/>
    <property type="evidence" value="ECO:0007669"/>
    <property type="project" value="UniProtKB-KW"/>
</dbReference>
<dbReference type="GO" id="GO:0046933">
    <property type="term" value="F:proton-transporting ATP synthase activity, rotational mechanism"/>
    <property type="evidence" value="ECO:0007669"/>
    <property type="project" value="UniProtKB-UniRule"/>
</dbReference>
<dbReference type="Gene3D" id="1.10.520.20">
    <property type="entry name" value="N-terminal domain of the delta subunit of the F1F0-ATP synthase"/>
    <property type="match status" value="1"/>
</dbReference>
<dbReference type="HAMAP" id="MF_01416">
    <property type="entry name" value="ATP_synth_delta_bact"/>
    <property type="match status" value="1"/>
</dbReference>
<dbReference type="InterPro" id="IPR026015">
    <property type="entry name" value="ATP_synth_OSCP/delta_N_sf"/>
</dbReference>
<dbReference type="InterPro" id="IPR020781">
    <property type="entry name" value="ATPase_OSCP/d_CS"/>
</dbReference>
<dbReference type="InterPro" id="IPR000711">
    <property type="entry name" value="ATPase_OSCP/dsu"/>
</dbReference>
<dbReference type="NCBIfam" id="TIGR01145">
    <property type="entry name" value="ATP_synt_delta"/>
    <property type="match status" value="1"/>
</dbReference>
<dbReference type="NCBIfam" id="NF004406">
    <property type="entry name" value="PRK05758.3-2"/>
    <property type="match status" value="1"/>
</dbReference>
<dbReference type="PANTHER" id="PTHR11910">
    <property type="entry name" value="ATP SYNTHASE DELTA CHAIN"/>
    <property type="match status" value="1"/>
</dbReference>
<dbReference type="Pfam" id="PF00213">
    <property type="entry name" value="OSCP"/>
    <property type="match status" value="1"/>
</dbReference>
<dbReference type="PRINTS" id="PR00125">
    <property type="entry name" value="ATPASEDELTA"/>
</dbReference>
<dbReference type="SUPFAM" id="SSF47928">
    <property type="entry name" value="N-terminal domain of the delta subunit of the F1F0-ATP synthase"/>
    <property type="match status" value="1"/>
</dbReference>
<dbReference type="PROSITE" id="PS00389">
    <property type="entry name" value="ATPASE_DELTA"/>
    <property type="match status" value="1"/>
</dbReference>
<evidence type="ECO:0000255" key="1">
    <source>
        <dbReference type="HAMAP-Rule" id="MF_01416"/>
    </source>
</evidence>
<feature type="chain" id="PRO_1000184754" description="ATP synthase subunit delta">
    <location>
        <begin position="1"/>
        <end position="190"/>
    </location>
</feature>